<accession>Q9J559</accession>
<evidence type="ECO:0000250" key="1"/>
<evidence type="ECO:0000305" key="2"/>
<feature type="chain" id="PRO_0000099217" description="Major core protein 4a precursor">
    <location>
        <begin position="1"/>
        <end position="891"/>
    </location>
</feature>
<protein>
    <recommendedName>
        <fullName>Major core protein 4a precursor</fullName>
        <shortName>p4a</shortName>
    </recommendedName>
    <alternativeName>
        <fullName>Virion core protein 4a precursor</fullName>
    </alternativeName>
</protein>
<dbReference type="EMBL" id="AF198100">
    <property type="protein sequence ID" value="AAF44518.1"/>
    <property type="molecule type" value="Genomic_DNA"/>
</dbReference>
<dbReference type="RefSeq" id="NP_039137.1">
    <property type="nucleotide sequence ID" value="NC_002188.1"/>
</dbReference>
<dbReference type="SMR" id="Q9J559"/>
<dbReference type="GeneID" id="1486722"/>
<dbReference type="KEGG" id="vg:1486722"/>
<dbReference type="Proteomes" id="UP000008597">
    <property type="component" value="Segment"/>
</dbReference>
<dbReference type="GO" id="GO:0044423">
    <property type="term" value="C:virion component"/>
    <property type="evidence" value="ECO:0007669"/>
    <property type="project" value="UniProtKB-KW"/>
</dbReference>
<dbReference type="GO" id="GO:0005198">
    <property type="term" value="F:structural molecule activity"/>
    <property type="evidence" value="ECO:0007669"/>
    <property type="project" value="InterPro"/>
</dbReference>
<dbReference type="InterPro" id="IPR005058">
    <property type="entry name" value="Poxvirus_P4A"/>
</dbReference>
<dbReference type="Pfam" id="PF03395">
    <property type="entry name" value="Pox_P4A"/>
    <property type="match status" value="1"/>
</dbReference>
<reference key="1">
    <citation type="journal article" date="2000" name="J. Virol.">
        <title>The genome of fowlpox virus.</title>
        <authorList>
            <person name="Afonso C.L."/>
            <person name="Tulman E.R."/>
            <person name="Lu Z."/>
            <person name="Zsak L."/>
            <person name="Kutish G.F."/>
            <person name="Rock D.L."/>
        </authorList>
    </citation>
    <scope>NUCLEOTIDE SEQUENCE [LARGE SCALE GENOMIC DNA]</scope>
</reference>
<proteinExistence type="inferred from homology"/>
<sequence length="891" mass="102269">MMLIKNIVTLDQLESSDYLYKLISSVLPSLCLDYKIDPKLANGYVHALDTIYSPELISILTDGERSQQLDTLGINYILSRKNDLGIYFPINIRENGEIVSTWNKNTGGYTNPIPCTISFNDLPPFTKILIQIRTMGCEAHARYFGGYVEHPSSPNILSPKINPNISFANSYIHSLTYPYIEGRADYSTYRPLLINGIMEKKDLANLLNVRALLEPMSRAIFDAIFKIQFHCNANNIVLVQNPNIDTDLITMQTLKYLVMYFQHFSGFTLRDIYLGGVRIRVDNSMLASYVVSIYFSKEIKYIEDNKLFSLDYIDQFVFRPDNSNLNITVTAQQLGIRILNMTSNRPYIINLLNIVSKSLVRHRNVPKEISLFWDGMSYDEYKNMKFIDMMFLGTTCYLFALYNKNGITYCSMLNDVLRAEETPIRICVFPRILKGKTIPTLIREILENINNISVRDFPKYDTHDVKHIGLSDAGFMLFFQFLRLMENKEPHIAVKEILMAYTGIKIDDKGSPYYITPESYRTFIFMLFKAMGFNVRVNRTTISSHSYTSYYVSPRVSKRYLTNMLQKASCSQSEAEKLLSSAHDLVSFMLSVNNSSNRDSYRRINRSFFGGFKESASEEDATLVQFISPVNILDRINVKGILSANALNEIMDTDVFLPENANFKENLKQLLKEDTIDGKSIAHIIPLNTIDRLIVSAGGVSVGELLENLDERVPDENATNEVIELITNALKDRNMKDSNFIATNILNSITQISEKQMDGIKKITCHGTMMFKELAMHIYFTERYFKAKISDDVKISILEKYRDFIELSKSLYKDLIGIDQIKSVLSIVHRTGRNIDDNPITQEDIQKAYNIARPKILKLTNYYTEMTKSYFENIKRIMNPEDANAVVFDNE</sequence>
<keyword id="KW-1185">Reference proteome</keyword>
<keyword id="KW-0946">Virion</keyword>
<name>P4A_FOWPN</name>
<organism>
    <name type="scientific">Fowlpox virus (strain NVSL)</name>
    <name type="common">FPV</name>
    <dbReference type="NCBI Taxonomy" id="928301"/>
    <lineage>
        <taxon>Viruses</taxon>
        <taxon>Varidnaviria</taxon>
        <taxon>Bamfordvirae</taxon>
        <taxon>Nucleocytoviricota</taxon>
        <taxon>Pokkesviricetes</taxon>
        <taxon>Chitovirales</taxon>
        <taxon>Poxviridae</taxon>
        <taxon>Chordopoxvirinae</taxon>
        <taxon>Avipoxvirus</taxon>
        <taxon>Fowlpox virus</taxon>
    </lineage>
</organism>
<gene>
    <name type="ordered locus">FPV174</name>
</gene>
<organismHost>
    <name type="scientific">Vertebrata</name>
    <dbReference type="NCBI Taxonomy" id="7742"/>
</organismHost>
<comment type="function">
    <text evidence="1">Core protein 4a is the most abundant virion protein. Major component of the virion core that undergoes proteolytic processing during the immature virion (IV) to mature virion (MV) transition (By similarity).</text>
</comment>
<comment type="subunit">
    <text evidence="1">Interacts with P39/A4.</text>
</comment>
<comment type="subcellular location">
    <subcellularLocation>
        <location evidence="1">Virion</location>
    </subcellularLocation>
    <text evidence="1">Probably localizes to the virion core wall.</text>
</comment>
<comment type="similarity">
    <text evidence="2">Belongs to the poxviridae protein P4a family.</text>
</comment>